<feature type="chain" id="PRO_1000023733" description="Transcription antitermination protein NusB">
    <location>
        <begin position="1"/>
        <end position="153"/>
    </location>
</feature>
<protein>
    <recommendedName>
        <fullName evidence="1">Transcription antitermination protein NusB</fullName>
    </recommendedName>
    <alternativeName>
        <fullName evidence="1">Antitermination factor NusB</fullName>
    </alternativeName>
</protein>
<dbReference type="EMBL" id="CP000527">
    <property type="protein sequence ID" value="ABM28877.1"/>
    <property type="molecule type" value="Genomic_DNA"/>
</dbReference>
<dbReference type="RefSeq" id="WP_010938493.1">
    <property type="nucleotide sequence ID" value="NC_008751.1"/>
</dbReference>
<dbReference type="SMR" id="A1VEL1"/>
<dbReference type="KEGG" id="dvl:Dvul_1860"/>
<dbReference type="HOGENOM" id="CLU_087843_3_1_7"/>
<dbReference type="Proteomes" id="UP000009173">
    <property type="component" value="Chromosome"/>
</dbReference>
<dbReference type="GO" id="GO:0005829">
    <property type="term" value="C:cytosol"/>
    <property type="evidence" value="ECO:0007669"/>
    <property type="project" value="TreeGrafter"/>
</dbReference>
<dbReference type="GO" id="GO:0003723">
    <property type="term" value="F:RNA binding"/>
    <property type="evidence" value="ECO:0007669"/>
    <property type="project" value="UniProtKB-UniRule"/>
</dbReference>
<dbReference type="GO" id="GO:0006353">
    <property type="term" value="P:DNA-templated transcription termination"/>
    <property type="evidence" value="ECO:0007669"/>
    <property type="project" value="UniProtKB-UniRule"/>
</dbReference>
<dbReference type="GO" id="GO:0031564">
    <property type="term" value="P:transcription antitermination"/>
    <property type="evidence" value="ECO:0007669"/>
    <property type="project" value="UniProtKB-KW"/>
</dbReference>
<dbReference type="Gene3D" id="1.10.940.10">
    <property type="entry name" value="NusB-like"/>
    <property type="match status" value="1"/>
</dbReference>
<dbReference type="HAMAP" id="MF_00073">
    <property type="entry name" value="NusB"/>
    <property type="match status" value="1"/>
</dbReference>
<dbReference type="InterPro" id="IPR035926">
    <property type="entry name" value="NusB-like_sf"/>
</dbReference>
<dbReference type="InterPro" id="IPR011605">
    <property type="entry name" value="NusB_fam"/>
</dbReference>
<dbReference type="InterPro" id="IPR006027">
    <property type="entry name" value="NusB_RsmB_TIM44"/>
</dbReference>
<dbReference type="NCBIfam" id="TIGR01951">
    <property type="entry name" value="nusB"/>
    <property type="match status" value="1"/>
</dbReference>
<dbReference type="PANTHER" id="PTHR11078:SF3">
    <property type="entry name" value="ANTITERMINATION NUSB DOMAIN-CONTAINING PROTEIN"/>
    <property type="match status" value="1"/>
</dbReference>
<dbReference type="PANTHER" id="PTHR11078">
    <property type="entry name" value="N UTILIZATION SUBSTANCE PROTEIN B-RELATED"/>
    <property type="match status" value="1"/>
</dbReference>
<dbReference type="Pfam" id="PF01029">
    <property type="entry name" value="NusB"/>
    <property type="match status" value="1"/>
</dbReference>
<dbReference type="SUPFAM" id="SSF48013">
    <property type="entry name" value="NusB-like"/>
    <property type="match status" value="1"/>
</dbReference>
<name>NUSB_NITV4</name>
<proteinExistence type="inferred from homology"/>
<comment type="function">
    <text evidence="1">Involved in transcription antitermination. Required for transcription of ribosomal RNA (rRNA) genes. Binds specifically to the boxA antiterminator sequence of the ribosomal RNA (rrn) operons.</text>
</comment>
<comment type="similarity">
    <text evidence="1">Belongs to the NusB family.</text>
</comment>
<gene>
    <name evidence="1" type="primary">nusB</name>
    <name type="ordered locus">Dvul_1860</name>
</gene>
<reference key="1">
    <citation type="journal article" date="2009" name="Environ. Microbiol.">
        <title>Contribution of mobile genetic elements to Desulfovibrio vulgaris genome plasticity.</title>
        <authorList>
            <person name="Walker C.B."/>
            <person name="Stolyar S."/>
            <person name="Chivian D."/>
            <person name="Pinel N."/>
            <person name="Gabster J.A."/>
            <person name="Dehal P.S."/>
            <person name="He Z."/>
            <person name="Yang Z.K."/>
            <person name="Yen H.C."/>
            <person name="Zhou J."/>
            <person name="Wall J.D."/>
            <person name="Hazen T.C."/>
            <person name="Arkin A.P."/>
            <person name="Stahl D.A."/>
        </authorList>
    </citation>
    <scope>NUCLEOTIDE SEQUENCE [LARGE SCALE GENOMIC DNA]</scope>
    <source>
        <strain>DP4</strain>
    </source>
</reference>
<organism>
    <name type="scientific">Nitratidesulfovibrio vulgaris (strain DP4)</name>
    <name type="common">Desulfovibrio vulgaris</name>
    <dbReference type="NCBI Taxonomy" id="391774"/>
    <lineage>
        <taxon>Bacteria</taxon>
        <taxon>Pseudomonadati</taxon>
        <taxon>Thermodesulfobacteriota</taxon>
        <taxon>Desulfovibrionia</taxon>
        <taxon>Desulfovibrionales</taxon>
        <taxon>Desulfovibrionaceae</taxon>
        <taxon>Nitratidesulfovibrio</taxon>
    </lineage>
</organism>
<accession>A1VEL1</accession>
<sequence length="153" mass="16830">MTTKGTPSRRAARALAFQILYGLGFSPAASVKQLREAYASSPDVADKGRSPQPEGFAWELIEGIWTEQANIDEVIGLFSQNWRIDRIGRVELTLLRIAVYEMLYRIDVPPKVAINEALELSKQFGDANARGFINGILDAAAKALEGGQLKPRV</sequence>
<evidence type="ECO:0000255" key="1">
    <source>
        <dbReference type="HAMAP-Rule" id="MF_00073"/>
    </source>
</evidence>
<keyword id="KW-0694">RNA-binding</keyword>
<keyword id="KW-0804">Transcription</keyword>
<keyword id="KW-0889">Transcription antitermination</keyword>
<keyword id="KW-0805">Transcription regulation</keyword>